<organism>
    <name type="scientific">Bradyrhizobium diazoefficiens (strain JCM 10833 / BCRC 13528 / IAM 13628 / NBRC 14792 / USDA 110)</name>
    <dbReference type="NCBI Taxonomy" id="224911"/>
    <lineage>
        <taxon>Bacteria</taxon>
        <taxon>Pseudomonadati</taxon>
        <taxon>Pseudomonadota</taxon>
        <taxon>Alphaproteobacteria</taxon>
        <taxon>Hyphomicrobiales</taxon>
        <taxon>Nitrobacteraceae</taxon>
        <taxon>Bradyrhizobium</taxon>
    </lineage>
</organism>
<feature type="chain" id="PRO_0000184825" description="3-methyl-2-oxobutanoate hydroxymethyltransferase 3">
    <location>
        <begin position="1"/>
        <end position="273"/>
    </location>
</feature>
<feature type="active site" description="Proton acceptor" evidence="1">
    <location>
        <position position="187"/>
    </location>
</feature>
<feature type="binding site" evidence="1">
    <location>
        <begin position="49"/>
        <end position="50"/>
    </location>
    <ligand>
        <name>3-methyl-2-oxobutanoate</name>
        <dbReference type="ChEBI" id="CHEBI:11851"/>
    </ligand>
</feature>
<feature type="binding site" evidence="1">
    <location>
        <position position="49"/>
    </location>
    <ligand>
        <name>Mg(2+)</name>
        <dbReference type="ChEBI" id="CHEBI:18420"/>
    </ligand>
</feature>
<feature type="binding site" evidence="1">
    <location>
        <position position="88"/>
    </location>
    <ligand>
        <name>3-methyl-2-oxobutanoate</name>
        <dbReference type="ChEBI" id="CHEBI:11851"/>
    </ligand>
</feature>
<feature type="binding site" evidence="1">
    <location>
        <position position="88"/>
    </location>
    <ligand>
        <name>Mg(2+)</name>
        <dbReference type="ChEBI" id="CHEBI:18420"/>
    </ligand>
</feature>
<feature type="binding site" evidence="1">
    <location>
        <position position="118"/>
    </location>
    <ligand>
        <name>3-methyl-2-oxobutanoate</name>
        <dbReference type="ChEBI" id="CHEBI:11851"/>
    </ligand>
</feature>
<feature type="binding site" evidence="1">
    <location>
        <position position="120"/>
    </location>
    <ligand>
        <name>Mg(2+)</name>
        <dbReference type="ChEBI" id="CHEBI:18420"/>
    </ligand>
</feature>
<keyword id="KW-0963">Cytoplasm</keyword>
<keyword id="KW-0460">Magnesium</keyword>
<keyword id="KW-0479">Metal-binding</keyword>
<keyword id="KW-0566">Pantothenate biosynthesis</keyword>
<keyword id="KW-1185">Reference proteome</keyword>
<keyword id="KW-0808">Transferase</keyword>
<reference key="1">
    <citation type="journal article" date="2002" name="DNA Res.">
        <title>Complete genomic sequence of nitrogen-fixing symbiotic bacterium Bradyrhizobium japonicum USDA110.</title>
        <authorList>
            <person name="Kaneko T."/>
            <person name="Nakamura Y."/>
            <person name="Sato S."/>
            <person name="Minamisawa K."/>
            <person name="Uchiumi T."/>
            <person name="Sasamoto S."/>
            <person name="Watanabe A."/>
            <person name="Idesawa K."/>
            <person name="Iriguchi M."/>
            <person name="Kawashima K."/>
            <person name="Kohara M."/>
            <person name="Matsumoto M."/>
            <person name="Shimpo S."/>
            <person name="Tsuruoka H."/>
            <person name="Wada T."/>
            <person name="Yamada M."/>
            <person name="Tabata S."/>
        </authorList>
    </citation>
    <scope>NUCLEOTIDE SEQUENCE [LARGE SCALE GENOMIC DNA]</scope>
    <source>
        <strain>JCM 10833 / BCRC 13528 / IAM 13628 / NBRC 14792 / USDA 110</strain>
    </source>
</reference>
<comment type="function">
    <text evidence="1">Catalyzes the reversible reaction in which hydroxymethyl group from 5,10-methylenetetrahydrofolate is transferred onto alpha-ketoisovalerate to form ketopantoate.</text>
</comment>
<comment type="catalytic activity">
    <reaction evidence="1">
        <text>3-methyl-2-oxobutanoate + (6R)-5,10-methylene-5,6,7,8-tetrahydrofolate + H2O = 2-dehydropantoate + (6S)-5,6,7,8-tetrahydrofolate</text>
        <dbReference type="Rhea" id="RHEA:11824"/>
        <dbReference type="ChEBI" id="CHEBI:11561"/>
        <dbReference type="ChEBI" id="CHEBI:11851"/>
        <dbReference type="ChEBI" id="CHEBI:15377"/>
        <dbReference type="ChEBI" id="CHEBI:15636"/>
        <dbReference type="ChEBI" id="CHEBI:57453"/>
        <dbReference type="EC" id="2.1.2.11"/>
    </reaction>
</comment>
<comment type="cofactor">
    <cofactor evidence="1">
        <name>Mg(2+)</name>
        <dbReference type="ChEBI" id="CHEBI:18420"/>
    </cofactor>
    <text evidence="1">Binds 1 Mg(2+) ion per subunit.</text>
</comment>
<comment type="pathway">
    <text evidence="1">Cofactor biosynthesis; (R)-pantothenate biosynthesis; (R)-pantoate from 3-methyl-2-oxobutanoate: step 1/2.</text>
</comment>
<comment type="subunit">
    <text evidence="1">Homodecamer; pentamer of dimers.</text>
</comment>
<comment type="subcellular location">
    <subcellularLocation>
        <location evidence="1">Cytoplasm</location>
    </subcellularLocation>
</comment>
<comment type="similarity">
    <text evidence="1">Belongs to the PanB family.</text>
</comment>
<accession>Q89MZ4</accession>
<gene>
    <name evidence="1" type="primary">panB3</name>
    <name type="ordered locus">blr4048</name>
</gene>
<name>PANB3_BRADU</name>
<protein>
    <recommendedName>
        <fullName evidence="1">3-methyl-2-oxobutanoate hydroxymethyltransferase 3</fullName>
        <ecNumber evidence="1">2.1.2.11</ecNumber>
    </recommendedName>
    <alternativeName>
        <fullName evidence="1">Ketopantoate hydroxymethyltransferase 3</fullName>
        <shortName evidence="1">KPHMT 3</shortName>
    </alternativeName>
</protein>
<evidence type="ECO:0000255" key="1">
    <source>
        <dbReference type="HAMAP-Rule" id="MF_00156"/>
    </source>
</evidence>
<proteinExistence type="inferred from homology"/>
<sequence>MSVQSAIRRKTAPDLRIRKNGEPIVMLTSYHAHTAALVDRHCDAILVGDSLGNVMHGFETTVPVTLEMMILQGCAVMRGSSQALVVVDMPFGSYEGSKEQAFQSAVRIMKETLCGAVKLEGGARMAETVAFLSERGIPVMGHIGLTPQSINTLGSFRAQGREEANWAPIENDARAIAEAGAFSIVIEAVAEPLARKITQSIAVPTIGIGASAACDGQILVLEDMLGLSPRSPKFVRRYGNLGPAIEEAIAGYARDVKSRAFPGPEHVYDMKKS</sequence>
<dbReference type="EC" id="2.1.2.11" evidence="1"/>
<dbReference type="EMBL" id="BA000040">
    <property type="protein sequence ID" value="BAC49313.1"/>
    <property type="molecule type" value="Genomic_DNA"/>
</dbReference>
<dbReference type="RefSeq" id="NP_770688.1">
    <property type="nucleotide sequence ID" value="NC_004463.1"/>
</dbReference>
<dbReference type="RefSeq" id="WP_011086824.1">
    <property type="nucleotide sequence ID" value="NC_004463.1"/>
</dbReference>
<dbReference type="SMR" id="Q89MZ4"/>
<dbReference type="STRING" id="224911.AAV28_17255"/>
<dbReference type="EnsemblBacteria" id="BAC49313">
    <property type="protein sequence ID" value="BAC49313"/>
    <property type="gene ID" value="BAC49313"/>
</dbReference>
<dbReference type="GeneID" id="46491050"/>
<dbReference type="KEGG" id="bja:blr4048"/>
<dbReference type="PATRIC" id="fig|224911.44.peg.3749"/>
<dbReference type="eggNOG" id="COG0413">
    <property type="taxonomic scope" value="Bacteria"/>
</dbReference>
<dbReference type="HOGENOM" id="CLU_036645_1_0_5"/>
<dbReference type="InParanoid" id="Q89MZ4"/>
<dbReference type="OrthoDB" id="9781789at2"/>
<dbReference type="PhylomeDB" id="Q89MZ4"/>
<dbReference type="UniPathway" id="UPA00028">
    <property type="reaction ID" value="UER00003"/>
</dbReference>
<dbReference type="Proteomes" id="UP000002526">
    <property type="component" value="Chromosome"/>
</dbReference>
<dbReference type="GO" id="GO:0005737">
    <property type="term" value="C:cytoplasm"/>
    <property type="evidence" value="ECO:0000318"/>
    <property type="project" value="GO_Central"/>
</dbReference>
<dbReference type="GO" id="GO:0003864">
    <property type="term" value="F:3-methyl-2-oxobutanoate hydroxymethyltransferase activity"/>
    <property type="evidence" value="ECO:0000318"/>
    <property type="project" value="GO_Central"/>
</dbReference>
<dbReference type="GO" id="GO:0000287">
    <property type="term" value="F:magnesium ion binding"/>
    <property type="evidence" value="ECO:0000318"/>
    <property type="project" value="GO_Central"/>
</dbReference>
<dbReference type="GO" id="GO:0015940">
    <property type="term" value="P:pantothenate biosynthetic process"/>
    <property type="evidence" value="ECO:0000318"/>
    <property type="project" value="GO_Central"/>
</dbReference>
<dbReference type="CDD" id="cd06557">
    <property type="entry name" value="KPHMT-like"/>
    <property type="match status" value="1"/>
</dbReference>
<dbReference type="FunFam" id="3.20.20.60:FF:000072">
    <property type="entry name" value="3-methyl-2-oxobutanoate hydroxymethyltransferase"/>
    <property type="match status" value="1"/>
</dbReference>
<dbReference type="Gene3D" id="3.20.20.60">
    <property type="entry name" value="Phosphoenolpyruvate-binding domains"/>
    <property type="match status" value="1"/>
</dbReference>
<dbReference type="HAMAP" id="MF_00156">
    <property type="entry name" value="PanB"/>
    <property type="match status" value="1"/>
</dbReference>
<dbReference type="InterPro" id="IPR003700">
    <property type="entry name" value="Pantoate_hydroxy_MeTrfase"/>
</dbReference>
<dbReference type="InterPro" id="IPR015813">
    <property type="entry name" value="Pyrv/PenolPyrv_kinase-like_dom"/>
</dbReference>
<dbReference type="InterPro" id="IPR040442">
    <property type="entry name" value="Pyrv_kinase-like_dom_sf"/>
</dbReference>
<dbReference type="NCBIfam" id="TIGR00222">
    <property type="entry name" value="panB"/>
    <property type="match status" value="1"/>
</dbReference>
<dbReference type="NCBIfam" id="NF001452">
    <property type="entry name" value="PRK00311.1"/>
    <property type="match status" value="1"/>
</dbReference>
<dbReference type="PANTHER" id="PTHR20881">
    <property type="entry name" value="3-METHYL-2-OXOBUTANOATE HYDROXYMETHYLTRANSFERASE"/>
    <property type="match status" value="1"/>
</dbReference>
<dbReference type="PANTHER" id="PTHR20881:SF0">
    <property type="entry name" value="3-METHYL-2-OXOBUTANOATE HYDROXYMETHYLTRANSFERASE"/>
    <property type="match status" value="1"/>
</dbReference>
<dbReference type="Pfam" id="PF02548">
    <property type="entry name" value="Pantoate_transf"/>
    <property type="match status" value="1"/>
</dbReference>
<dbReference type="PIRSF" id="PIRSF000388">
    <property type="entry name" value="Pantoate_hydroxy_MeTrfase"/>
    <property type="match status" value="1"/>
</dbReference>
<dbReference type="SUPFAM" id="SSF51621">
    <property type="entry name" value="Phosphoenolpyruvate/pyruvate domain"/>
    <property type="match status" value="1"/>
</dbReference>